<proteinExistence type="inferred from homology"/>
<feature type="chain" id="PRO_1000020203" description="Methionyl-tRNA formyltransferase">
    <location>
        <begin position="1"/>
        <end position="307"/>
    </location>
</feature>
<feature type="binding site" evidence="1">
    <location>
        <begin position="108"/>
        <end position="111"/>
    </location>
    <ligand>
        <name>(6S)-5,6,7,8-tetrahydrofolate</name>
        <dbReference type="ChEBI" id="CHEBI:57453"/>
    </ligand>
</feature>
<sequence length="307" mass="32793">MRIIFAGTPDFAVPSLRAAAQRHEVVAVYTQPDRPAGRGRGLTPSPVKLEAVARGIPVFQPQTLRSPEALATVRKLDADLMVVVAYGLILPKAVLAAPTHGCWNVHASLLPRWRGAAPIQRAIEAGDTETGVCLMQMEAGLDTGPVLLSQRIEIGEQETGGQLHDRLAALGAQVLSDGLGLLRAGIRPVAQPQPDDGVTYAHKLDKAQARLDWAQPAQELARRVRAFNPWPVAEAILAGERVRLHGAVALELAHQHPPGTLLAASKQGIDIACGEGALRVRVLQREGGKAITAADYLNARRDLPALR</sequence>
<comment type="function">
    <text evidence="1">Attaches a formyl group to the free amino group of methionyl-tRNA(fMet). The formyl group appears to play a dual role in the initiator identity of N-formylmethionyl-tRNA by promoting its recognition by IF2 and preventing the misappropriation of this tRNA by the elongation apparatus.</text>
</comment>
<comment type="catalytic activity">
    <reaction evidence="1">
        <text>L-methionyl-tRNA(fMet) + (6R)-10-formyltetrahydrofolate = N-formyl-L-methionyl-tRNA(fMet) + (6S)-5,6,7,8-tetrahydrofolate + H(+)</text>
        <dbReference type="Rhea" id="RHEA:24380"/>
        <dbReference type="Rhea" id="RHEA-COMP:9952"/>
        <dbReference type="Rhea" id="RHEA-COMP:9953"/>
        <dbReference type="ChEBI" id="CHEBI:15378"/>
        <dbReference type="ChEBI" id="CHEBI:57453"/>
        <dbReference type="ChEBI" id="CHEBI:78530"/>
        <dbReference type="ChEBI" id="CHEBI:78844"/>
        <dbReference type="ChEBI" id="CHEBI:195366"/>
        <dbReference type="EC" id="2.1.2.9"/>
    </reaction>
</comment>
<comment type="similarity">
    <text evidence="1">Belongs to the Fmt family.</text>
</comment>
<gene>
    <name evidence="1" type="primary">fmt</name>
    <name type="ordered locus">XCV3925</name>
</gene>
<name>FMT_XANE5</name>
<accession>Q3BNK7</accession>
<dbReference type="EC" id="2.1.2.9" evidence="1"/>
<dbReference type="EMBL" id="AM039952">
    <property type="protein sequence ID" value="CAJ25656.1"/>
    <property type="molecule type" value="Genomic_DNA"/>
</dbReference>
<dbReference type="RefSeq" id="WP_011348782.1">
    <property type="nucleotide sequence ID" value="NZ_CP017190.1"/>
</dbReference>
<dbReference type="SMR" id="Q3BNK7"/>
<dbReference type="STRING" id="456327.BJD11_03015"/>
<dbReference type="KEGG" id="xcv:XCV3925"/>
<dbReference type="eggNOG" id="COG0223">
    <property type="taxonomic scope" value="Bacteria"/>
</dbReference>
<dbReference type="HOGENOM" id="CLU_033347_1_2_6"/>
<dbReference type="Proteomes" id="UP000007069">
    <property type="component" value="Chromosome"/>
</dbReference>
<dbReference type="GO" id="GO:0005829">
    <property type="term" value="C:cytosol"/>
    <property type="evidence" value="ECO:0007669"/>
    <property type="project" value="TreeGrafter"/>
</dbReference>
<dbReference type="GO" id="GO:0004479">
    <property type="term" value="F:methionyl-tRNA formyltransferase activity"/>
    <property type="evidence" value="ECO:0007669"/>
    <property type="project" value="UniProtKB-UniRule"/>
</dbReference>
<dbReference type="CDD" id="cd08646">
    <property type="entry name" value="FMT_core_Met-tRNA-FMT_N"/>
    <property type="match status" value="1"/>
</dbReference>
<dbReference type="CDD" id="cd08704">
    <property type="entry name" value="Met_tRNA_FMT_C"/>
    <property type="match status" value="1"/>
</dbReference>
<dbReference type="FunFam" id="3.40.50.170:FF:000003">
    <property type="entry name" value="Methionyl-tRNA formyltransferase"/>
    <property type="match status" value="1"/>
</dbReference>
<dbReference type="Gene3D" id="3.10.25.10">
    <property type="entry name" value="Formyl transferase, C-terminal domain"/>
    <property type="match status" value="1"/>
</dbReference>
<dbReference type="Gene3D" id="3.40.50.170">
    <property type="entry name" value="Formyl transferase, N-terminal domain"/>
    <property type="match status" value="1"/>
</dbReference>
<dbReference type="HAMAP" id="MF_00182">
    <property type="entry name" value="Formyl_trans"/>
    <property type="match status" value="1"/>
</dbReference>
<dbReference type="InterPro" id="IPR005794">
    <property type="entry name" value="Fmt"/>
</dbReference>
<dbReference type="InterPro" id="IPR005793">
    <property type="entry name" value="Formyl_trans_C"/>
</dbReference>
<dbReference type="InterPro" id="IPR037022">
    <property type="entry name" value="Formyl_trans_C_sf"/>
</dbReference>
<dbReference type="InterPro" id="IPR002376">
    <property type="entry name" value="Formyl_transf_N"/>
</dbReference>
<dbReference type="InterPro" id="IPR036477">
    <property type="entry name" value="Formyl_transf_N_sf"/>
</dbReference>
<dbReference type="InterPro" id="IPR011034">
    <property type="entry name" value="Formyl_transferase-like_C_sf"/>
</dbReference>
<dbReference type="InterPro" id="IPR001555">
    <property type="entry name" value="GART_AS"/>
</dbReference>
<dbReference type="InterPro" id="IPR044135">
    <property type="entry name" value="Met-tRNA-FMT_C"/>
</dbReference>
<dbReference type="InterPro" id="IPR041711">
    <property type="entry name" value="Met-tRNA-FMT_N"/>
</dbReference>
<dbReference type="NCBIfam" id="TIGR00460">
    <property type="entry name" value="fmt"/>
    <property type="match status" value="1"/>
</dbReference>
<dbReference type="PANTHER" id="PTHR11138">
    <property type="entry name" value="METHIONYL-TRNA FORMYLTRANSFERASE"/>
    <property type="match status" value="1"/>
</dbReference>
<dbReference type="PANTHER" id="PTHR11138:SF5">
    <property type="entry name" value="METHIONYL-TRNA FORMYLTRANSFERASE, MITOCHONDRIAL"/>
    <property type="match status" value="1"/>
</dbReference>
<dbReference type="Pfam" id="PF02911">
    <property type="entry name" value="Formyl_trans_C"/>
    <property type="match status" value="1"/>
</dbReference>
<dbReference type="Pfam" id="PF00551">
    <property type="entry name" value="Formyl_trans_N"/>
    <property type="match status" value="1"/>
</dbReference>
<dbReference type="SUPFAM" id="SSF50486">
    <property type="entry name" value="FMT C-terminal domain-like"/>
    <property type="match status" value="1"/>
</dbReference>
<dbReference type="SUPFAM" id="SSF53328">
    <property type="entry name" value="Formyltransferase"/>
    <property type="match status" value="1"/>
</dbReference>
<dbReference type="PROSITE" id="PS00373">
    <property type="entry name" value="GART"/>
    <property type="match status" value="1"/>
</dbReference>
<evidence type="ECO:0000255" key="1">
    <source>
        <dbReference type="HAMAP-Rule" id="MF_00182"/>
    </source>
</evidence>
<keyword id="KW-0648">Protein biosynthesis</keyword>
<keyword id="KW-0808">Transferase</keyword>
<reference key="1">
    <citation type="journal article" date="2005" name="J. Bacteriol.">
        <title>Insights into genome plasticity and pathogenicity of the plant pathogenic Bacterium Xanthomonas campestris pv. vesicatoria revealed by the complete genome sequence.</title>
        <authorList>
            <person name="Thieme F."/>
            <person name="Koebnik R."/>
            <person name="Bekel T."/>
            <person name="Berger C."/>
            <person name="Boch J."/>
            <person name="Buettner D."/>
            <person name="Caldana C."/>
            <person name="Gaigalat L."/>
            <person name="Goesmann A."/>
            <person name="Kay S."/>
            <person name="Kirchner O."/>
            <person name="Lanz C."/>
            <person name="Linke B."/>
            <person name="McHardy A.C."/>
            <person name="Meyer F."/>
            <person name="Mittenhuber G."/>
            <person name="Nies D.H."/>
            <person name="Niesbach-Kloesgen U."/>
            <person name="Patschkowski T."/>
            <person name="Rueckert C."/>
            <person name="Rupp O."/>
            <person name="Schneiker S."/>
            <person name="Schuster S.C."/>
            <person name="Vorhoelter F.J."/>
            <person name="Weber E."/>
            <person name="Puehler A."/>
            <person name="Bonas U."/>
            <person name="Bartels D."/>
            <person name="Kaiser O."/>
        </authorList>
    </citation>
    <scope>NUCLEOTIDE SEQUENCE [LARGE SCALE GENOMIC DNA]</scope>
    <source>
        <strain>85-10</strain>
    </source>
</reference>
<protein>
    <recommendedName>
        <fullName evidence="1">Methionyl-tRNA formyltransferase</fullName>
        <ecNumber evidence="1">2.1.2.9</ecNumber>
    </recommendedName>
</protein>
<organism>
    <name type="scientific">Xanthomonas euvesicatoria pv. vesicatoria (strain 85-10)</name>
    <name type="common">Xanthomonas campestris pv. vesicatoria</name>
    <dbReference type="NCBI Taxonomy" id="316273"/>
    <lineage>
        <taxon>Bacteria</taxon>
        <taxon>Pseudomonadati</taxon>
        <taxon>Pseudomonadota</taxon>
        <taxon>Gammaproteobacteria</taxon>
        <taxon>Lysobacterales</taxon>
        <taxon>Lysobacteraceae</taxon>
        <taxon>Xanthomonas</taxon>
    </lineage>
</organism>